<gene>
    <name evidence="1" type="primary">cyoE</name>
    <name type="synonym">idsA</name>
    <name type="ordered locus">ABO_1906</name>
</gene>
<comment type="function">
    <text evidence="1">Converts heme B (protoheme IX) to heme O by substitution of the vinyl group on carbon 2 of heme B porphyrin ring with a hydroxyethyl farnesyl side group.</text>
</comment>
<comment type="catalytic activity">
    <reaction evidence="1">
        <text>heme b + (2E,6E)-farnesyl diphosphate + H2O = Fe(II)-heme o + diphosphate</text>
        <dbReference type="Rhea" id="RHEA:28070"/>
        <dbReference type="ChEBI" id="CHEBI:15377"/>
        <dbReference type="ChEBI" id="CHEBI:33019"/>
        <dbReference type="ChEBI" id="CHEBI:60344"/>
        <dbReference type="ChEBI" id="CHEBI:60530"/>
        <dbReference type="ChEBI" id="CHEBI:175763"/>
        <dbReference type="EC" id="2.5.1.141"/>
    </reaction>
</comment>
<comment type="pathway">
    <text evidence="1">Porphyrin-containing compound metabolism; heme O biosynthesis; heme O from protoheme: step 1/1.</text>
</comment>
<comment type="subcellular location">
    <subcellularLocation>
        <location evidence="1">Cell inner membrane</location>
        <topology evidence="1">Multi-pass membrane protein</topology>
    </subcellularLocation>
</comment>
<comment type="miscellaneous">
    <text evidence="1">Carbon 2 of the heme B porphyrin ring is defined according to the Fischer nomenclature.</text>
</comment>
<comment type="similarity">
    <text evidence="1">Belongs to the UbiA prenyltransferase family. Protoheme IX farnesyltransferase subfamily.</text>
</comment>
<evidence type="ECO:0000255" key="1">
    <source>
        <dbReference type="HAMAP-Rule" id="MF_00154"/>
    </source>
</evidence>
<organism>
    <name type="scientific">Alcanivorax borkumensis (strain ATCC 700651 / DSM 11573 / NCIMB 13689 / SK2)</name>
    <dbReference type="NCBI Taxonomy" id="393595"/>
    <lineage>
        <taxon>Bacteria</taxon>
        <taxon>Pseudomonadati</taxon>
        <taxon>Pseudomonadota</taxon>
        <taxon>Gammaproteobacteria</taxon>
        <taxon>Oceanospirillales</taxon>
        <taxon>Alcanivoracaceae</taxon>
        <taxon>Alcanivorax</taxon>
    </lineage>
</organism>
<proteinExistence type="inferred from homology"/>
<accession>Q0VN94</accession>
<name>CYOE_ALCBS</name>
<feature type="chain" id="PRO_0000326881" description="Protoheme IX farnesyltransferase">
    <location>
        <begin position="1"/>
        <end position="303"/>
    </location>
</feature>
<feature type="transmembrane region" description="Helical" evidence="1">
    <location>
        <begin position="17"/>
        <end position="37"/>
    </location>
</feature>
<feature type="transmembrane region" description="Helical" evidence="1">
    <location>
        <begin position="42"/>
        <end position="62"/>
    </location>
</feature>
<feature type="transmembrane region" description="Helical" evidence="1">
    <location>
        <begin position="91"/>
        <end position="111"/>
    </location>
</feature>
<feature type="transmembrane region" description="Helical" evidence="1">
    <location>
        <begin position="114"/>
        <end position="134"/>
    </location>
</feature>
<feature type="transmembrane region" description="Helical" evidence="1">
    <location>
        <begin position="142"/>
        <end position="162"/>
    </location>
</feature>
<feature type="transmembrane region" description="Helical" evidence="1">
    <location>
        <begin position="168"/>
        <end position="188"/>
    </location>
</feature>
<feature type="transmembrane region" description="Helical" evidence="1">
    <location>
        <begin position="208"/>
        <end position="228"/>
    </location>
</feature>
<feature type="transmembrane region" description="Helical" evidence="1">
    <location>
        <begin position="231"/>
        <end position="251"/>
    </location>
</feature>
<feature type="transmembrane region" description="Helical" evidence="1">
    <location>
        <begin position="270"/>
        <end position="290"/>
    </location>
</feature>
<keyword id="KW-0997">Cell inner membrane</keyword>
<keyword id="KW-1003">Cell membrane</keyword>
<keyword id="KW-0350">Heme biosynthesis</keyword>
<keyword id="KW-0472">Membrane</keyword>
<keyword id="KW-1185">Reference proteome</keyword>
<keyword id="KW-0808">Transferase</keyword>
<keyword id="KW-0812">Transmembrane</keyword>
<keyword id="KW-1133">Transmembrane helix</keyword>
<protein>
    <recommendedName>
        <fullName evidence="1">Protoheme IX farnesyltransferase</fullName>
        <ecNumber evidence="1">2.5.1.141</ecNumber>
    </recommendedName>
    <alternativeName>
        <fullName evidence="1">Heme B farnesyltransferase</fullName>
    </alternativeName>
    <alternativeName>
        <fullName evidence="1">Heme O synthase</fullName>
    </alternativeName>
</protein>
<reference key="1">
    <citation type="journal article" date="2006" name="Nat. Biotechnol.">
        <title>Genome sequence of the ubiquitous hydrocarbon-degrading marine bacterium Alcanivorax borkumensis.</title>
        <authorList>
            <person name="Schneiker S."/>
            <person name="Martins dos Santos V.A.P."/>
            <person name="Bartels D."/>
            <person name="Bekel T."/>
            <person name="Brecht M."/>
            <person name="Buhrmester J."/>
            <person name="Chernikova T.N."/>
            <person name="Denaro R."/>
            <person name="Ferrer M."/>
            <person name="Gertler C."/>
            <person name="Goesmann A."/>
            <person name="Golyshina O.V."/>
            <person name="Kaminski F."/>
            <person name="Khachane A.N."/>
            <person name="Lang S."/>
            <person name="Linke B."/>
            <person name="McHardy A.C."/>
            <person name="Meyer F."/>
            <person name="Nechitaylo T."/>
            <person name="Puehler A."/>
            <person name="Regenhardt D."/>
            <person name="Rupp O."/>
            <person name="Sabirova J.S."/>
            <person name="Selbitschka W."/>
            <person name="Yakimov M.M."/>
            <person name="Timmis K.N."/>
            <person name="Vorhoelter F.-J."/>
            <person name="Weidner S."/>
            <person name="Kaiser O."/>
            <person name="Golyshin P.N."/>
        </authorList>
    </citation>
    <scope>NUCLEOTIDE SEQUENCE [LARGE SCALE GENOMIC DNA]</scope>
    <source>
        <strain>ATCC 700651 / DSM 11573 / NCIMB 13689 / SK2</strain>
    </source>
</reference>
<sequence>MSERTHWRDYLALTKPGVVMLLMVTAVAGMFLATEPAGMVPLATFIPAFVGLSLAMMASAAINQIMDQKIDAIMKRTEKRPLVAGKLTPKAAITFAVLLATASMIMLYFLVNPLTAWLTLFGFVGYAFIYTLYLKRATPQNIVIGGIAGAIPPLLGWTAVTGEAHPYAWLLVLIIFVWTPPHFWALAIHRRDEYAKADIPMLPVTHGIPFTRESVLYYTILLFICTLLPYLTGMSDLIYLLSALILGLVFLYHAVRLRFSEDPKLPMKTFGYSITYLFALFTALLVDHYLPVTPANVASWLGA</sequence>
<dbReference type="EC" id="2.5.1.141" evidence="1"/>
<dbReference type="EMBL" id="AM286690">
    <property type="protein sequence ID" value="CAL17354.1"/>
    <property type="molecule type" value="Genomic_DNA"/>
</dbReference>
<dbReference type="RefSeq" id="WP_011589185.1">
    <property type="nucleotide sequence ID" value="NC_008260.1"/>
</dbReference>
<dbReference type="SMR" id="Q0VN94"/>
<dbReference type="STRING" id="393595.ABO_1906"/>
<dbReference type="KEGG" id="abo:ABO_1906"/>
<dbReference type="eggNOG" id="COG0109">
    <property type="taxonomic scope" value="Bacteria"/>
</dbReference>
<dbReference type="HOGENOM" id="CLU_029631_0_2_6"/>
<dbReference type="UniPathway" id="UPA00834">
    <property type="reaction ID" value="UER00712"/>
</dbReference>
<dbReference type="Proteomes" id="UP000008871">
    <property type="component" value="Chromosome"/>
</dbReference>
<dbReference type="GO" id="GO:0005886">
    <property type="term" value="C:plasma membrane"/>
    <property type="evidence" value="ECO:0007669"/>
    <property type="project" value="UniProtKB-SubCell"/>
</dbReference>
<dbReference type="GO" id="GO:0008495">
    <property type="term" value="F:protoheme IX farnesyltransferase activity"/>
    <property type="evidence" value="ECO:0007669"/>
    <property type="project" value="UniProtKB-UniRule"/>
</dbReference>
<dbReference type="GO" id="GO:0048034">
    <property type="term" value="P:heme O biosynthetic process"/>
    <property type="evidence" value="ECO:0007669"/>
    <property type="project" value="UniProtKB-UniRule"/>
</dbReference>
<dbReference type="CDD" id="cd13957">
    <property type="entry name" value="PT_UbiA_Cox10"/>
    <property type="match status" value="1"/>
</dbReference>
<dbReference type="FunFam" id="1.10.357.140:FF:000001">
    <property type="entry name" value="Protoheme IX farnesyltransferase"/>
    <property type="match status" value="1"/>
</dbReference>
<dbReference type="Gene3D" id="1.10.357.140">
    <property type="entry name" value="UbiA prenyltransferase"/>
    <property type="match status" value="1"/>
</dbReference>
<dbReference type="HAMAP" id="MF_00154">
    <property type="entry name" value="CyoE_CtaB"/>
    <property type="match status" value="1"/>
</dbReference>
<dbReference type="InterPro" id="IPR006369">
    <property type="entry name" value="Protohaem_IX_farnesylTrfase"/>
</dbReference>
<dbReference type="InterPro" id="IPR000537">
    <property type="entry name" value="UbiA_prenyltransferase"/>
</dbReference>
<dbReference type="InterPro" id="IPR030470">
    <property type="entry name" value="UbiA_prenylTrfase_CS"/>
</dbReference>
<dbReference type="InterPro" id="IPR044878">
    <property type="entry name" value="UbiA_sf"/>
</dbReference>
<dbReference type="NCBIfam" id="TIGR01473">
    <property type="entry name" value="cyoE_ctaB"/>
    <property type="match status" value="1"/>
</dbReference>
<dbReference type="NCBIfam" id="NF003349">
    <property type="entry name" value="PRK04375.1-2"/>
    <property type="match status" value="1"/>
</dbReference>
<dbReference type="PANTHER" id="PTHR43448:SF7">
    <property type="entry name" value="4-HYDROXYBENZOATE SOLANESYLTRANSFERASE"/>
    <property type="match status" value="1"/>
</dbReference>
<dbReference type="PANTHER" id="PTHR43448">
    <property type="entry name" value="PROTOHEME IX FARNESYLTRANSFERASE, MITOCHONDRIAL"/>
    <property type="match status" value="1"/>
</dbReference>
<dbReference type="Pfam" id="PF01040">
    <property type="entry name" value="UbiA"/>
    <property type="match status" value="1"/>
</dbReference>
<dbReference type="PROSITE" id="PS00943">
    <property type="entry name" value="UBIA"/>
    <property type="match status" value="1"/>
</dbReference>